<protein>
    <recommendedName>
        <fullName>Acetyl esterase</fullName>
        <ecNumber>3.1.1.-</ecNumber>
    </recommendedName>
    <alternativeName>
        <fullName>EcE</fullName>
    </alternativeName>
</protein>
<dbReference type="EC" id="3.1.1.-"/>
<dbReference type="EMBL" id="D90259">
    <property type="protein sequence ID" value="BAA14305.2"/>
    <property type="molecule type" value="Genomic_DNA"/>
</dbReference>
<dbReference type="EMBL" id="U82664">
    <property type="protein sequence ID" value="AAB40230.1"/>
    <property type="molecule type" value="Genomic_DNA"/>
</dbReference>
<dbReference type="EMBL" id="U00096">
    <property type="protein sequence ID" value="AAC73578.1"/>
    <property type="molecule type" value="Genomic_DNA"/>
</dbReference>
<dbReference type="EMBL" id="AP009048">
    <property type="protein sequence ID" value="BAE76255.1"/>
    <property type="molecule type" value="Genomic_DNA"/>
</dbReference>
<dbReference type="EMBL" id="D00798">
    <property type="status" value="NOT_ANNOTATED_CDS"/>
    <property type="molecule type" value="Genomic_DNA"/>
</dbReference>
<dbReference type="EMBL" id="L35149">
    <property type="status" value="NOT_ANNOTATED_CDS"/>
    <property type="molecule type" value="Genomic_DNA"/>
</dbReference>
<dbReference type="PIR" id="C64778">
    <property type="entry name" value="C64778"/>
</dbReference>
<dbReference type="RefSeq" id="NP_415009.1">
    <property type="nucleotide sequence ID" value="NC_000913.3"/>
</dbReference>
<dbReference type="RefSeq" id="WP_000801813.1">
    <property type="nucleotide sequence ID" value="NZ_SSZK01000009.1"/>
</dbReference>
<dbReference type="PDB" id="4KRX">
    <property type="method" value="X-ray"/>
    <property type="resolution" value="1.80 A"/>
    <property type="chains" value="A/B/C=1-319"/>
</dbReference>
<dbReference type="PDB" id="4KRY">
    <property type="method" value="X-ray"/>
    <property type="resolution" value="2.30 A"/>
    <property type="chains" value="A/B/C/D/E/F=1-319"/>
</dbReference>
<dbReference type="PDBsum" id="4KRX"/>
<dbReference type="PDBsum" id="4KRY"/>
<dbReference type="SMR" id="P23872"/>
<dbReference type="BioGRID" id="4263164">
    <property type="interactions" value="13"/>
</dbReference>
<dbReference type="DIP" id="DIP-9062N"/>
<dbReference type="FunCoup" id="P23872">
    <property type="interactions" value="586"/>
</dbReference>
<dbReference type="IntAct" id="P23872">
    <property type="interactions" value="8"/>
</dbReference>
<dbReference type="STRING" id="511145.b0476"/>
<dbReference type="ESTHER" id="ecoli-Aes">
    <property type="family name" value="Acetyl_esterase"/>
</dbReference>
<dbReference type="MEROPS" id="S09.A47"/>
<dbReference type="MoonProt" id="P23872"/>
<dbReference type="jPOST" id="P23872"/>
<dbReference type="PaxDb" id="511145-b0476"/>
<dbReference type="DNASU" id="947514"/>
<dbReference type="EnsemblBacteria" id="AAC73578">
    <property type="protein sequence ID" value="AAC73578"/>
    <property type="gene ID" value="b0476"/>
</dbReference>
<dbReference type="GeneID" id="947514"/>
<dbReference type="KEGG" id="ecj:JW0465"/>
<dbReference type="KEGG" id="eco:b0476"/>
<dbReference type="KEGG" id="ecoc:C3026_02340"/>
<dbReference type="PATRIC" id="fig|1411691.4.peg.1800"/>
<dbReference type="EchoBASE" id="EB1093"/>
<dbReference type="eggNOG" id="COG0657">
    <property type="taxonomic scope" value="Bacteria"/>
</dbReference>
<dbReference type="HOGENOM" id="CLU_012494_6_4_6"/>
<dbReference type="InParanoid" id="P23872"/>
<dbReference type="OMA" id="LWYPSTM"/>
<dbReference type="OrthoDB" id="9806180at2"/>
<dbReference type="PhylomeDB" id="P23872"/>
<dbReference type="BioCyc" id="EcoCyc:EG11101-MONOMER"/>
<dbReference type="BioCyc" id="MetaCyc:EG11101-MONOMER"/>
<dbReference type="BRENDA" id="3.1.1.6">
    <property type="organism ID" value="2026"/>
</dbReference>
<dbReference type="SABIO-RK" id="P23872"/>
<dbReference type="EvolutionaryTrace" id="P23872"/>
<dbReference type="PRO" id="PR:P23872"/>
<dbReference type="Proteomes" id="UP000000625">
    <property type="component" value="Chromosome"/>
</dbReference>
<dbReference type="GO" id="GO:0005737">
    <property type="term" value="C:cytoplasm"/>
    <property type="evidence" value="ECO:0000303"/>
    <property type="project" value="EcoliWiki"/>
</dbReference>
<dbReference type="GO" id="GO:0008126">
    <property type="term" value="F:acetylesterase activity"/>
    <property type="evidence" value="ECO:0000314"/>
    <property type="project" value="EcoCyc"/>
</dbReference>
<dbReference type="GO" id="GO:0016787">
    <property type="term" value="F:hydrolase activity"/>
    <property type="evidence" value="ECO:0000314"/>
    <property type="project" value="EcoliWiki"/>
</dbReference>
<dbReference type="GO" id="GO:0042803">
    <property type="term" value="F:protein homodimerization activity"/>
    <property type="evidence" value="ECO:0000314"/>
    <property type="project" value="EcoCyc"/>
</dbReference>
<dbReference type="GO" id="GO:0034338">
    <property type="term" value="F:short-chain carboxylesterase activity"/>
    <property type="evidence" value="ECO:0000314"/>
    <property type="project" value="EcoliWiki"/>
</dbReference>
<dbReference type="FunFam" id="3.40.50.1820:FF:000035">
    <property type="entry name" value="Acetyl esterase"/>
    <property type="match status" value="1"/>
</dbReference>
<dbReference type="Gene3D" id="3.40.50.1820">
    <property type="entry name" value="alpha/beta hydrolase"/>
    <property type="match status" value="1"/>
</dbReference>
<dbReference type="HAMAP" id="MF_01958">
    <property type="entry name" value="Acetyl_esterase"/>
    <property type="match status" value="1"/>
</dbReference>
<dbReference type="InterPro" id="IPR013094">
    <property type="entry name" value="AB_hydrolase_3"/>
</dbReference>
<dbReference type="InterPro" id="IPR029058">
    <property type="entry name" value="AB_hydrolase_fold"/>
</dbReference>
<dbReference type="InterPro" id="IPR023508">
    <property type="entry name" value="Acetyl_esterase"/>
</dbReference>
<dbReference type="InterPro" id="IPR050300">
    <property type="entry name" value="GDXG_lipolytic_enzyme"/>
</dbReference>
<dbReference type="InterPro" id="IPR002168">
    <property type="entry name" value="Lipase_GDXG_HIS_AS"/>
</dbReference>
<dbReference type="InterPro" id="IPR033140">
    <property type="entry name" value="Lipase_GDXG_put_SER_AS"/>
</dbReference>
<dbReference type="NCBIfam" id="NF007547">
    <property type="entry name" value="PRK10162.1"/>
    <property type="match status" value="1"/>
</dbReference>
<dbReference type="PANTHER" id="PTHR48081">
    <property type="entry name" value="AB HYDROLASE SUPERFAMILY PROTEIN C4A8.06C"/>
    <property type="match status" value="1"/>
</dbReference>
<dbReference type="PANTHER" id="PTHR48081:SF8">
    <property type="entry name" value="ALPHA_BETA HYDROLASE FOLD-3 DOMAIN-CONTAINING PROTEIN-RELATED"/>
    <property type="match status" value="1"/>
</dbReference>
<dbReference type="Pfam" id="PF07859">
    <property type="entry name" value="Abhydrolase_3"/>
    <property type="match status" value="1"/>
</dbReference>
<dbReference type="SUPFAM" id="SSF53474">
    <property type="entry name" value="alpha/beta-Hydrolases"/>
    <property type="match status" value="1"/>
</dbReference>
<dbReference type="PROSITE" id="PS01173">
    <property type="entry name" value="LIPASE_GDXG_HIS"/>
    <property type="match status" value="1"/>
</dbReference>
<dbReference type="PROSITE" id="PS01174">
    <property type="entry name" value="LIPASE_GDXG_SER"/>
    <property type="match status" value="1"/>
</dbReference>
<reference key="1">
    <citation type="journal article" date="1997" name="J. Bacteriol.">
        <title>Characterization of the aes gene of Escherichia coli encoding an enzyme with esterase activity.</title>
        <authorList>
            <person name="Peist R."/>
            <person name="Koch A."/>
            <person name="Bolek P."/>
            <person name="Sewitz S."/>
            <person name="Kolbus T."/>
            <person name="Boos W."/>
        </authorList>
    </citation>
    <scope>NUCLEOTIDE SEQUENCE [GENOMIC DNA]</scope>
    <scope>CHARACTERIZATION</scope>
</reference>
<reference key="2">
    <citation type="journal article" date="1991" name="J. Mol. Biol.">
        <title>Isolation and characterization of visible light-sensitive mutants of Escherichia coli K12.</title>
        <authorList>
            <person name="Miyamoto K."/>
            <person name="Nakahigashi K."/>
            <person name="Nishimura K."/>
            <person name="Inokuchi H."/>
        </authorList>
    </citation>
    <scope>NUCLEOTIDE SEQUENCE [GENOMIC DNA]</scope>
    <source>
        <strain>K12</strain>
    </source>
</reference>
<reference key="3">
    <citation type="submission" date="1993-09" db="EMBL/GenBank/DDBJ databases">
        <authorList>
            <person name="Miyamoto K."/>
        </authorList>
    </citation>
    <scope>SEQUENCE REVISION</scope>
</reference>
<reference key="4">
    <citation type="submission" date="1997-01" db="EMBL/GenBank/DDBJ databases">
        <title>Sequence of minutes 4-25 of Escherichia coli.</title>
        <authorList>
            <person name="Chung E."/>
            <person name="Allen E."/>
            <person name="Araujo R."/>
            <person name="Aparicio A.M."/>
            <person name="Davis K."/>
            <person name="Duncan M."/>
            <person name="Federspiel N."/>
            <person name="Hyman R."/>
            <person name="Kalman S."/>
            <person name="Komp C."/>
            <person name="Kurdi O."/>
            <person name="Lew H."/>
            <person name="Lin D."/>
            <person name="Namath A."/>
            <person name="Oefner P."/>
            <person name="Roberts D."/>
            <person name="Schramm S."/>
            <person name="Davis R.W."/>
        </authorList>
    </citation>
    <scope>NUCLEOTIDE SEQUENCE [LARGE SCALE GENOMIC DNA]</scope>
    <source>
        <strain>K12 / MG1655 / ATCC 47076</strain>
    </source>
</reference>
<reference key="5">
    <citation type="journal article" date="1997" name="Science">
        <title>The complete genome sequence of Escherichia coli K-12.</title>
        <authorList>
            <person name="Blattner F.R."/>
            <person name="Plunkett G. III"/>
            <person name="Bloch C.A."/>
            <person name="Perna N.T."/>
            <person name="Burland V."/>
            <person name="Riley M."/>
            <person name="Collado-Vides J."/>
            <person name="Glasner J.D."/>
            <person name="Rode C.K."/>
            <person name="Mayhew G.F."/>
            <person name="Gregor J."/>
            <person name="Davis N.W."/>
            <person name="Kirkpatrick H.A."/>
            <person name="Goeden M.A."/>
            <person name="Rose D.J."/>
            <person name="Mau B."/>
            <person name="Shao Y."/>
        </authorList>
    </citation>
    <scope>NUCLEOTIDE SEQUENCE [LARGE SCALE GENOMIC DNA]</scope>
    <source>
        <strain>K12 / MG1655 / ATCC 47076</strain>
    </source>
</reference>
<reference key="6">
    <citation type="journal article" date="2006" name="Mol. Syst. Biol.">
        <title>Highly accurate genome sequences of Escherichia coli K-12 strains MG1655 and W3110.</title>
        <authorList>
            <person name="Hayashi K."/>
            <person name="Morooka N."/>
            <person name="Yamamoto Y."/>
            <person name="Fujita K."/>
            <person name="Isono K."/>
            <person name="Choi S."/>
            <person name="Ohtsubo E."/>
            <person name="Baba T."/>
            <person name="Wanner B.L."/>
            <person name="Mori H."/>
            <person name="Horiuchi T."/>
        </authorList>
    </citation>
    <scope>NUCLEOTIDE SEQUENCE [LARGE SCALE GENOMIC DNA]</scope>
    <source>
        <strain>K12 / W3110 / ATCC 27325 / DSM 5911</strain>
    </source>
</reference>
<reference key="7">
    <citation type="journal article" date="1995" name="J. Bacteriol.">
        <title>Cloning and characterization of the gsk gene encoding guanosine kinase of Escherichia coli.</title>
        <authorList>
            <person name="Harlow K.W."/>
            <person name="Nygaard P."/>
            <person name="Hove-Jensen B."/>
        </authorList>
    </citation>
    <scope>NUCLEOTIDE SEQUENCE [GENOMIC DNA] OF 1-103</scope>
    <source>
        <strain>K12</strain>
    </source>
</reference>
<reference key="8">
    <citation type="submission" date="1990-12" db="EMBL/GenBank/DDBJ databases">
        <authorList>
            <person name="Mori H."/>
            <person name="Iida A."/>
            <person name="Teshiba S."/>
            <person name="Fujio T."/>
        </authorList>
    </citation>
    <scope>NUCLEOTIDE SEQUENCE [GENOMIC DNA] OF 1-21</scope>
    <source>
        <strain>K12</strain>
    </source>
</reference>
<reference key="9">
    <citation type="journal article" date="1998" name="Biochem. J.">
        <title>An esterase from Escherichia coli with a sequence similarity to hormone-sensitive lipase.</title>
        <authorList>
            <person name="Kanaya S."/>
            <person name="Koyanagi T."/>
            <person name="Kanaya E."/>
        </authorList>
    </citation>
    <scope>PROTEIN SEQUENCE OF 1-10</scope>
    <scope>FUNCTION</scope>
    <scope>SUBCELLULAR LOCATION</scope>
    <scope>BIOPHYSICOCHEMICAL PROPERTIES</scope>
</reference>
<reference key="10">
    <citation type="journal article" date="1999" name="FEBS Lett.">
        <title>Identification of catalytically essential residues in Escherichia coli esterase by site-directed mutagenesis.</title>
        <authorList>
            <person name="Haruki M."/>
            <person name="Oohashi Y."/>
            <person name="Mizuguchi S."/>
            <person name="Matsuo Y."/>
            <person name="Morikawa M."/>
            <person name="Kanaya S."/>
        </authorList>
    </citation>
    <scope>MUTAGENESIS OF HIS-103; GLU-128; GLY-163; ASP-164; SER-165; GLY-167; ASP-262; ASP-266 AND HIS-292</scope>
</reference>
<reference key="11">
    <citation type="journal article" date="2002" name="J. Biol. Chem.">
        <title>The Aes protein directly controls the activity of MalT, the central transcriptional activator of the Escherichia coli maltose regulon.</title>
        <authorList>
            <person name="Joly N."/>
            <person name="Danot O."/>
            <person name="Schlegel A."/>
            <person name="Boos W."/>
            <person name="Richet E."/>
        </authorList>
    </citation>
    <scope>FUNCTION</scope>
    <scope>INTERACTION WITH MALT</scope>
</reference>
<reference key="12">
    <citation type="journal article" date="2002" name="J. Biol. Chem.">
        <title>The Aes protein and the monomeric alpha-galactosidase from Escherichia coli form a non-covalent complex. Implications for the regulation of carbohydrate metabolism.</title>
        <authorList>
            <person name="Mandrich L."/>
            <person name="Caputo E."/>
            <person name="Martin B.M."/>
            <person name="Rossi M."/>
            <person name="Manco G."/>
        </authorList>
    </citation>
    <scope>FUNCTION</scope>
    <scope>DIMERIZATION</scope>
    <scope>INTERACTION WITH MELA</scope>
</reference>
<feature type="chain" id="PRO_0000071555" description="Acetyl esterase">
    <location>
        <begin position="1"/>
        <end position="319"/>
    </location>
</feature>
<feature type="short sequence motif" description="Involved in the stabilization of the negatively charged intermediate by the formation of the oxyanion hole" evidence="1">
    <location>
        <begin position="91"/>
        <end position="93"/>
    </location>
</feature>
<feature type="active site" evidence="6">
    <location>
        <position position="165"/>
    </location>
</feature>
<feature type="active site" evidence="6">
    <location>
        <position position="262"/>
    </location>
</feature>
<feature type="active site" evidence="6">
    <location>
        <position position="292"/>
    </location>
</feature>
<feature type="mutagenesis site" description="Reduces enzymatic efficiency." evidence="2">
    <original>H</original>
    <variation>A</variation>
    <location>
        <position position="103"/>
    </location>
</feature>
<feature type="mutagenesis site" description="Reduces enzymatic efficiency." evidence="2">
    <original>E</original>
    <variation>A</variation>
    <location>
        <position position="128"/>
    </location>
</feature>
<feature type="mutagenesis site" description="Diminishes catalytic efficiency." evidence="2">
    <original>G</original>
    <variation>A</variation>
    <location>
        <position position="163"/>
    </location>
</feature>
<feature type="mutagenesis site" description="Strongly reduces enzymatic activity." evidence="2">
    <original>D</original>
    <variation>A</variation>
    <location>
        <position position="164"/>
    </location>
</feature>
<feature type="mutagenesis site" description="Abolishes enzymatic activity." evidence="2">
    <original>S</original>
    <variation>A</variation>
    <location>
        <position position="165"/>
    </location>
</feature>
<feature type="mutagenesis site" description="Diminishes substrate affinity." evidence="2">
    <original>G</original>
    <variation>A</variation>
    <location>
        <position position="167"/>
    </location>
</feature>
<feature type="mutagenesis site" description="Strongly reduces enzymatic activity." evidence="2">
    <original>D</original>
    <variation>A</variation>
    <location>
        <position position="262"/>
    </location>
</feature>
<feature type="mutagenesis site" description="Reduces enzymatic efficiency." evidence="2">
    <original>D</original>
    <variation>A</variation>
    <location>
        <position position="266"/>
    </location>
</feature>
<feature type="mutagenesis site" description="Abolishes enzymatic activity." evidence="2">
    <original>H</original>
    <variation>A</variation>
    <location>
        <position position="292"/>
    </location>
</feature>
<feature type="sequence conflict" description="In Ref. 8; D00798." evidence="6" ref="8">
    <original>K</original>
    <variation>N</variation>
    <location>
        <position position="18"/>
    </location>
</feature>
<feature type="sequence conflict" description="In Ref. 2; BAA14305." evidence="6" ref="2">
    <original>LAAHQQPCEFKLYPGTLHAFLHYSRMMKTADEALRDGAQFFTAQL</original>
    <variation>VSCASAAL</variation>
    <location>
        <begin position="275"/>
        <end position="319"/>
    </location>
</feature>
<feature type="helix" evidence="7">
    <location>
        <begin position="9"/>
        <end position="12"/>
    </location>
</feature>
<feature type="helix" evidence="7">
    <location>
        <begin position="15"/>
        <end position="21"/>
    </location>
</feature>
<feature type="strand" evidence="8">
    <location>
        <begin position="26"/>
        <end position="28"/>
    </location>
</feature>
<feature type="helix" evidence="7">
    <location>
        <begin position="37"/>
        <end position="52"/>
    </location>
</feature>
<feature type="strand" evidence="7">
    <location>
        <begin position="59"/>
        <end position="65"/>
    </location>
</feature>
<feature type="strand" evidence="7">
    <location>
        <begin position="72"/>
        <end position="78"/>
    </location>
</feature>
<feature type="strand" evidence="7">
    <location>
        <begin position="86"/>
        <end position="90"/>
    </location>
</feature>
<feature type="turn" evidence="7">
    <location>
        <begin position="94"/>
        <end position="96"/>
    </location>
</feature>
<feature type="turn" evidence="7">
    <location>
        <begin position="100"/>
        <end position="103"/>
    </location>
</feature>
<feature type="helix" evidence="7">
    <location>
        <begin position="104"/>
        <end position="114"/>
    </location>
</feature>
<feature type="strand" evidence="7">
    <location>
        <begin position="116"/>
        <end position="121"/>
    </location>
</feature>
<feature type="turn" evidence="7">
    <location>
        <begin position="126"/>
        <end position="128"/>
    </location>
</feature>
<feature type="helix" evidence="7">
    <location>
        <begin position="133"/>
        <end position="147"/>
    </location>
</feature>
<feature type="helix" evidence="7">
    <location>
        <begin position="149"/>
        <end position="152"/>
    </location>
</feature>
<feature type="strand" evidence="7">
    <location>
        <begin position="157"/>
        <end position="164"/>
    </location>
</feature>
<feature type="helix" evidence="7">
    <location>
        <begin position="166"/>
        <end position="180"/>
    </location>
</feature>
<feature type="strand" evidence="7">
    <location>
        <begin position="185"/>
        <end position="195"/>
    </location>
</feature>
<feature type="helix" evidence="7">
    <location>
        <begin position="204"/>
        <end position="208"/>
    </location>
</feature>
<feature type="turn" evidence="7">
    <location>
        <begin position="212"/>
        <end position="214"/>
    </location>
</feature>
<feature type="helix" evidence="7">
    <location>
        <begin position="218"/>
        <end position="228"/>
    </location>
</feature>
<feature type="helix" evidence="7">
    <location>
        <begin position="232"/>
        <end position="236"/>
    </location>
</feature>
<feature type="turn" evidence="7">
    <location>
        <begin position="238"/>
        <end position="240"/>
    </location>
</feature>
<feature type="helix" evidence="7">
    <location>
        <begin position="242"/>
        <end position="244"/>
    </location>
</feature>
<feature type="strand" evidence="8">
    <location>
        <begin position="248"/>
        <end position="250"/>
    </location>
</feature>
<feature type="strand" evidence="7">
    <location>
        <begin position="254"/>
        <end position="259"/>
    </location>
</feature>
<feature type="helix" evidence="7">
    <location>
        <begin position="265"/>
        <end position="277"/>
    </location>
</feature>
<feature type="strand" evidence="7">
    <location>
        <begin position="282"/>
        <end position="287"/>
    </location>
</feature>
<feature type="helix" evidence="7">
    <location>
        <begin position="294"/>
        <end position="297"/>
    </location>
</feature>
<feature type="turn" evidence="7">
    <location>
        <begin position="298"/>
        <end position="300"/>
    </location>
</feature>
<feature type="helix" evidence="7">
    <location>
        <begin position="302"/>
        <end position="317"/>
    </location>
</feature>
<evidence type="ECO:0000250" key="1">
    <source>
        <dbReference type="UniProtKB" id="Q5NUF3"/>
    </source>
</evidence>
<evidence type="ECO:0000269" key="2">
    <source>
    </source>
</evidence>
<evidence type="ECO:0000269" key="3">
    <source>
    </source>
</evidence>
<evidence type="ECO:0000269" key="4">
    <source>
    </source>
</evidence>
<evidence type="ECO:0000269" key="5">
    <source>
    </source>
</evidence>
<evidence type="ECO:0000305" key="6"/>
<evidence type="ECO:0007829" key="7">
    <source>
        <dbReference type="PDB" id="4KRX"/>
    </source>
</evidence>
<evidence type="ECO:0007829" key="8">
    <source>
        <dbReference type="PDB" id="4KRY"/>
    </source>
</evidence>
<comment type="function">
    <text evidence="3 4 5">Displays esterase activity towards short chain fatty esters (acyl chain length of up to 8 carbons). Able to hydrolyze triacetylglycerol (triacetin) and tributyrylglycerol (tributyrin), but not trioleylglycerol (triolein) or cholesterol oleate. Negatively regulates MalT activity by antagonizing maltotriose binding. Inhibits MelA galactosidase activity.</text>
</comment>
<comment type="biophysicochemical properties">
    <kinetics>
        <KM evidence="5">1.5 mM for p-nitrophenylacetate (at pH 7.1 and 25 degrees Celsius)</KM>
        <KM evidence="5">0.7 mM for p-nitrophenylpropionate (at pH 7.1 and 25 degrees Celsius)</KM>
        <KM evidence="5">0.5 mM for p-nitrophenylbutyrate (at pH 7.1 and 25 degrees Celsius)</KM>
        <KM evidence="5">0.26 mM for p-nitrophenylvalerate (at pH 7.1 and 25 degrees Celsius)</KM>
        <KM evidence="5">0.22 mM for p-nitrophenylhexanoate (at pH 7.1 and 25 degrees Celsius)</KM>
        <KM evidence="5">0.16 mM for p-nitrophenyloctanoate (at pH 7.1 and 25 degrees Celsius)</KM>
        <Vmax evidence="5">34.2 umol/min/mg enzyme toward p-nitrophenylbutyrate (at pH 5.6 and 30 degrees Celsius)</Vmax>
        <Vmax evidence="5">3.67 umol/min/mg enzyme toward tributyrylglycerol (at pH 5.6 and 30 degrees Celsius)</Vmax>
        <Vmax evidence="5">0.22 umol/min/mg enzyme toward trioleylglycerol (at pH 5.6 and 30 degrees Celsius)</Vmax>
    </kinetics>
    <phDependence>
        <text evidence="5">Optimum pH is 9.0.</text>
    </phDependence>
</comment>
<comment type="subunit">
    <text evidence="3 4">Homodimer. Interacts with MalT and MelA.</text>
</comment>
<comment type="subcellular location">
    <subcellularLocation>
        <location evidence="5">Cytoplasm</location>
    </subcellularLocation>
</comment>
<comment type="miscellaneous">
    <text>Not essential for cell growth.</text>
</comment>
<comment type="similarity">
    <text evidence="6">Belongs to the 'GDXG' lipolytic enzyme family.</text>
</comment>
<comment type="sequence caution" evidence="6">
    <conflict type="frameshift">
        <sequence resource="EMBL" id="L35149"/>
    </conflict>
</comment>
<proteinExistence type="evidence at protein level"/>
<accession>P23872</accession>
<accession>P77282</accession>
<accession>Q2MBV1</accession>
<gene>
    <name type="primary">aes</name>
    <name type="synonym">ybaC</name>
    <name type="ordered locus">b0476</name>
    <name type="ordered locus">JW0465</name>
</gene>
<organism>
    <name type="scientific">Escherichia coli (strain K12)</name>
    <dbReference type="NCBI Taxonomy" id="83333"/>
    <lineage>
        <taxon>Bacteria</taxon>
        <taxon>Pseudomonadati</taxon>
        <taxon>Pseudomonadota</taxon>
        <taxon>Gammaproteobacteria</taxon>
        <taxon>Enterobacterales</taxon>
        <taxon>Enterobacteriaceae</taxon>
        <taxon>Escherichia</taxon>
    </lineage>
</organism>
<name>AES_ECOLI</name>
<keyword id="KW-0002">3D-structure</keyword>
<keyword id="KW-0963">Cytoplasm</keyword>
<keyword id="KW-0903">Direct protein sequencing</keyword>
<keyword id="KW-0378">Hydrolase</keyword>
<keyword id="KW-1185">Reference proteome</keyword>
<keyword id="KW-0719">Serine esterase</keyword>
<sequence length="319" mass="36034">MKPENKLPVLDLISAEMKTVVNTLQPDLPPWPATGTIAEQRQYYTLERRFWNAGAPEMATRAYMVPTKYGQVETRLFCPQPDSPATLFYLHGGGFILGNLDTHDRIMRLLASYSQCTVIGIDYTLSPEARFPQAIEEIVAACCYFHQQAEDYQINMSRIGFAGDSAGAMLALASALWLRDKQIDCGKVAGVLLWYGLYGLRDSVTRRLLGGVWDGLTQQDLQMYEEAYLSNDADRESPYYCLFNNDLTREVPPCFIAGAEFDPLLDDSRLLYQTLAAHQQPCEFKLYPGTLHAFLHYSRMMKTADEALRDGAQFFTAQL</sequence>